<name>MNHA2_STAAW</name>
<accession>Q8NXT2</accession>
<proteinExistence type="inferred from homology"/>
<keyword id="KW-0050">Antiport</keyword>
<keyword id="KW-1003">Cell membrane</keyword>
<keyword id="KW-0406">Ion transport</keyword>
<keyword id="KW-0472">Membrane</keyword>
<keyword id="KW-0812">Transmembrane</keyword>
<keyword id="KW-1133">Transmembrane helix</keyword>
<keyword id="KW-0813">Transport</keyword>
<evidence type="ECO:0000250" key="1"/>
<evidence type="ECO:0000255" key="2"/>
<evidence type="ECO:0000305" key="3"/>
<feature type="chain" id="PRO_0000372292" description="Putative antiporter subunit mnhA2">
    <location>
        <begin position="1"/>
        <end position="800"/>
    </location>
</feature>
<feature type="transmembrane region" description="Helical" evidence="2">
    <location>
        <begin position="1"/>
        <end position="21"/>
    </location>
</feature>
<feature type="transmembrane region" description="Helical" evidence="2">
    <location>
        <begin position="33"/>
        <end position="53"/>
    </location>
</feature>
<feature type="transmembrane region" description="Helical" evidence="2">
    <location>
        <begin position="78"/>
        <end position="98"/>
    </location>
</feature>
<feature type="transmembrane region" description="Helical" evidence="2">
    <location>
        <begin position="118"/>
        <end position="138"/>
    </location>
</feature>
<feature type="transmembrane region" description="Helical" evidence="2">
    <location>
        <begin position="167"/>
        <end position="187"/>
    </location>
</feature>
<feature type="transmembrane region" description="Helical" evidence="2">
    <location>
        <begin position="207"/>
        <end position="227"/>
    </location>
</feature>
<feature type="transmembrane region" description="Helical" evidence="2">
    <location>
        <begin position="241"/>
        <end position="261"/>
    </location>
</feature>
<feature type="transmembrane region" description="Helical" evidence="2">
    <location>
        <begin position="273"/>
        <end position="293"/>
    </location>
</feature>
<feature type="transmembrane region" description="Helical" evidence="2">
    <location>
        <begin position="300"/>
        <end position="320"/>
    </location>
</feature>
<feature type="transmembrane region" description="Helical" evidence="2">
    <location>
        <begin position="331"/>
        <end position="351"/>
    </location>
</feature>
<feature type="transmembrane region" description="Helical" evidence="2">
    <location>
        <begin position="387"/>
        <end position="407"/>
    </location>
</feature>
<feature type="transmembrane region" description="Helical" evidence="2">
    <location>
        <begin position="424"/>
        <end position="444"/>
    </location>
</feature>
<feature type="transmembrane region" description="Helical" evidence="2">
    <location>
        <begin position="472"/>
        <end position="492"/>
    </location>
</feature>
<feature type="transmembrane region" description="Helical" evidence="2">
    <location>
        <begin position="527"/>
        <end position="547"/>
    </location>
</feature>
<feature type="transmembrane region" description="Helical" evidence="2">
    <location>
        <begin position="595"/>
        <end position="615"/>
    </location>
</feature>
<feature type="transmembrane region" description="Helical" evidence="2">
    <location>
        <begin position="627"/>
        <end position="647"/>
    </location>
</feature>
<feature type="transmembrane region" description="Helical" evidence="2">
    <location>
        <begin position="651"/>
        <end position="671"/>
    </location>
</feature>
<feature type="transmembrane region" description="Helical" evidence="2">
    <location>
        <begin position="676"/>
        <end position="696"/>
    </location>
</feature>
<feature type="transmembrane region" description="Helical" evidence="2">
    <location>
        <begin position="712"/>
        <end position="732"/>
    </location>
</feature>
<feature type="transmembrane region" description="Helical" evidence="2">
    <location>
        <begin position="768"/>
        <end position="788"/>
    </location>
</feature>
<organism>
    <name type="scientific">Staphylococcus aureus (strain MW2)</name>
    <dbReference type="NCBI Taxonomy" id="196620"/>
    <lineage>
        <taxon>Bacteria</taxon>
        <taxon>Bacillati</taxon>
        <taxon>Bacillota</taxon>
        <taxon>Bacilli</taxon>
        <taxon>Bacillales</taxon>
        <taxon>Staphylococcaceae</taxon>
        <taxon>Staphylococcus</taxon>
    </lineage>
</organism>
<gene>
    <name type="primary">mnhA2</name>
    <name type="synonym">mrpA2</name>
    <name type="ordered locus">MW0585</name>
</gene>
<comment type="subunit">
    <text evidence="1">May form a heterooligomeric complex that consists of seven subunits: mnhA2, mnhB2, mnhC2, mnhD2, mnhE2, mnhF2 and mnhG2.</text>
</comment>
<comment type="subcellular location">
    <subcellularLocation>
        <location evidence="3">Cell membrane</location>
        <topology evidence="3">Multi-pass membrane protein</topology>
    </subcellularLocation>
</comment>
<comment type="similarity">
    <text evidence="3">Belongs to the CPA3 antiporters (TC 2.A.63) subunit A family.</text>
</comment>
<reference key="1">
    <citation type="journal article" date="2002" name="Lancet">
        <title>Genome and virulence determinants of high virulence community-acquired MRSA.</title>
        <authorList>
            <person name="Baba T."/>
            <person name="Takeuchi F."/>
            <person name="Kuroda M."/>
            <person name="Yuzawa H."/>
            <person name="Aoki K."/>
            <person name="Oguchi A."/>
            <person name="Nagai Y."/>
            <person name="Iwama N."/>
            <person name="Asano K."/>
            <person name="Naimi T."/>
            <person name="Kuroda H."/>
            <person name="Cui L."/>
            <person name="Yamamoto K."/>
            <person name="Hiramatsu K."/>
        </authorList>
    </citation>
    <scope>NUCLEOTIDE SEQUENCE [LARGE SCALE GENOMIC DNA]</scope>
    <source>
        <strain>MW2</strain>
    </source>
</reference>
<protein>
    <recommendedName>
        <fullName>Putative antiporter subunit mnhA2</fullName>
    </recommendedName>
    <alternativeName>
        <fullName>Mrp complex subunit A2</fullName>
    </alternativeName>
    <alternativeName>
        <fullName>Putative NADH-ubiquinone oxidoreductase subunit mnhA2</fullName>
    </alternativeName>
</protein>
<sequence length="800" mass="89705">MSLVYLLIAILVIMAMILLMSKRRALAKYAGYIALVAPVISSIYFLIQIPSVAKLQYLSTSIPWIKTLDINLDLRLDGLSLMFSLIISLIGIAVFFYATQYLSSRKDNLPRFYFYLTLFMFSMIGIVLSDNTILMYIFWELTSVSSFLLISYWYNNGDSQFGAMQSFMITVFGGLALLVGFIMLYIMTGTNNITEILGQADHIKNHGLFIPMIFMFLLGAFTKSAQFPFHIWLPRAMAAPTPVSAYLHSATMVKAGIFLLLRFTPLLGLSNMYVYIVTFVGLITMLFGSITALKQWDLKGILAYSTISQLGMIMAMVGIGGGYAQHQQDAIASIYVFVLFGALFHLMNHAIFKCALFMGVGILDHEAGSRDIRILSGMRQLFPKMNLVMTIAALSMAGVPFLNGFLSKEMFLDALTQTGQLSQFSLISMIAIVFVGVIASVFTFTYALYMVKEVFWTKYDSKVFTKKNIHEPWLFSLPSLILMVLVPVIFFVPNIFGKGIIVLALRAVSGGNHQIDQLAPHVSQWHGFNIPLLLTIIIILLGSVLAIKVDWKKVFTGKIRQISVSKSYEMVYRHFEKFATKRFKRVMQDRLNQYIIMTLGIFMIIIGYGYIRIGLPKVHQLHVSEFGALEIILAIVTVTIGISLIFIRQRLTMVILNGVIGFVVTLFFIAMKAPDLALTQLVVETITTILFIVSFSRLPNVPRSNANKKREIIKISVSLLMALIVVSLIFITQQTDGLSSISDFYLKADKLTGGKNIVNAILGDFRALDTLFEGLVLIITGLGIYTLLNYQDRRGQDERE</sequence>
<dbReference type="EMBL" id="BA000033">
    <property type="protein sequence ID" value="BAB94450.1"/>
    <property type="molecule type" value="Genomic_DNA"/>
</dbReference>
<dbReference type="RefSeq" id="WP_000060780.1">
    <property type="nucleotide sequence ID" value="NC_003923.1"/>
</dbReference>
<dbReference type="SMR" id="Q8NXT2"/>
<dbReference type="KEGG" id="sam:MW0585"/>
<dbReference type="HOGENOM" id="CLU_007100_2_1_9"/>
<dbReference type="GO" id="GO:0005886">
    <property type="term" value="C:plasma membrane"/>
    <property type="evidence" value="ECO:0007669"/>
    <property type="project" value="UniProtKB-SubCell"/>
</dbReference>
<dbReference type="GO" id="GO:0015297">
    <property type="term" value="F:antiporter activity"/>
    <property type="evidence" value="ECO:0007669"/>
    <property type="project" value="UniProtKB-KW"/>
</dbReference>
<dbReference type="GO" id="GO:0006811">
    <property type="term" value="P:monoatomic ion transport"/>
    <property type="evidence" value="ECO:0007669"/>
    <property type="project" value="UniProtKB-KW"/>
</dbReference>
<dbReference type="InterPro" id="IPR050616">
    <property type="entry name" value="CPA3_Na-H_Antiporter_A"/>
</dbReference>
<dbReference type="InterPro" id="IPR025383">
    <property type="entry name" value="MrpA_C/MbhD"/>
</dbReference>
<dbReference type="InterPro" id="IPR046806">
    <property type="entry name" value="MrpA_C/MbhE"/>
</dbReference>
<dbReference type="InterPro" id="IPR001750">
    <property type="entry name" value="ND/Mrp_TM"/>
</dbReference>
<dbReference type="InterPro" id="IPR001516">
    <property type="entry name" value="Proton_antipo_N"/>
</dbReference>
<dbReference type="NCBIfam" id="NF009286">
    <property type="entry name" value="PRK12646.1"/>
    <property type="match status" value="1"/>
</dbReference>
<dbReference type="PANTHER" id="PTHR43373">
    <property type="entry name" value="NA(+)/H(+) ANTIPORTER SUBUNIT"/>
    <property type="match status" value="1"/>
</dbReference>
<dbReference type="PANTHER" id="PTHR43373:SF1">
    <property type="entry name" value="NA(+)_H(+) ANTIPORTER SUBUNIT A"/>
    <property type="match status" value="1"/>
</dbReference>
<dbReference type="Pfam" id="PF13244">
    <property type="entry name" value="MbhD"/>
    <property type="match status" value="1"/>
</dbReference>
<dbReference type="Pfam" id="PF20501">
    <property type="entry name" value="MbhE"/>
    <property type="match status" value="1"/>
</dbReference>
<dbReference type="Pfam" id="PF00361">
    <property type="entry name" value="Proton_antipo_M"/>
    <property type="match status" value="1"/>
</dbReference>
<dbReference type="Pfam" id="PF00662">
    <property type="entry name" value="Proton_antipo_N"/>
    <property type="match status" value="1"/>
</dbReference>
<dbReference type="PRINTS" id="PR01434">
    <property type="entry name" value="NADHDHGNASE5"/>
</dbReference>